<protein>
    <recommendedName>
        <fullName evidence="4">E3 UFM1-protein ligase 1</fullName>
        <ecNumber evidence="1">2.3.2.-</ecNumber>
    </recommendedName>
    <alternativeName>
        <fullName evidence="4">E3 UFM1-protein transferase 1</fullName>
    </alternativeName>
</protein>
<dbReference type="EC" id="2.3.2.-" evidence="1"/>
<dbReference type="EMBL" id="BC056784">
    <property type="protein sequence ID" value="AAH56784.1"/>
    <property type="molecule type" value="mRNA"/>
</dbReference>
<dbReference type="RefSeq" id="NP_956900.1">
    <property type="nucleotide sequence ID" value="NM_200606.1"/>
</dbReference>
<dbReference type="SMR" id="Q6PGY6"/>
<dbReference type="FunCoup" id="Q6PGY6">
    <property type="interactions" value="2562"/>
</dbReference>
<dbReference type="STRING" id="7955.ENSDARP00000021768"/>
<dbReference type="PaxDb" id="7955-ENSDARP00000021768"/>
<dbReference type="GeneID" id="393578"/>
<dbReference type="KEGG" id="dre:393578"/>
<dbReference type="AGR" id="ZFIN:ZDB-GENE-040426-1163"/>
<dbReference type="CTD" id="23376"/>
<dbReference type="ZFIN" id="ZDB-GENE-040426-1163">
    <property type="gene designation" value="ufl1"/>
</dbReference>
<dbReference type="eggNOG" id="KOG2235">
    <property type="taxonomic scope" value="Eukaryota"/>
</dbReference>
<dbReference type="InParanoid" id="Q6PGY6"/>
<dbReference type="OrthoDB" id="10258297at2759"/>
<dbReference type="PhylomeDB" id="Q6PGY6"/>
<dbReference type="Reactome" id="R-DRE-983168">
    <property type="pathway name" value="Antigen processing: Ubiquitination &amp; Proteasome degradation"/>
</dbReference>
<dbReference type="PRO" id="PR:Q6PGY6"/>
<dbReference type="Proteomes" id="UP000000437">
    <property type="component" value="Chromosome 20"/>
</dbReference>
<dbReference type="GO" id="GO:0005737">
    <property type="term" value="C:cytoplasm"/>
    <property type="evidence" value="ECO:0000250"/>
    <property type="project" value="UniProtKB"/>
</dbReference>
<dbReference type="GO" id="GO:0005829">
    <property type="term" value="C:cytosol"/>
    <property type="evidence" value="ECO:0007669"/>
    <property type="project" value="UniProtKB-SubCell"/>
</dbReference>
<dbReference type="GO" id="GO:0005783">
    <property type="term" value="C:endoplasmic reticulum"/>
    <property type="evidence" value="ECO:0000250"/>
    <property type="project" value="UniProtKB"/>
</dbReference>
<dbReference type="GO" id="GO:0005789">
    <property type="term" value="C:endoplasmic reticulum membrane"/>
    <property type="evidence" value="ECO:0000250"/>
    <property type="project" value="UniProtKB"/>
</dbReference>
<dbReference type="GO" id="GO:0005634">
    <property type="term" value="C:nucleus"/>
    <property type="evidence" value="ECO:0000250"/>
    <property type="project" value="UniProtKB"/>
</dbReference>
<dbReference type="GO" id="GO:0035861">
    <property type="term" value="C:site of double-strand break"/>
    <property type="evidence" value="ECO:0000250"/>
    <property type="project" value="UniProtKB"/>
</dbReference>
<dbReference type="GO" id="GO:0061666">
    <property type="term" value="F:UFM1 ligase activity"/>
    <property type="evidence" value="ECO:0000250"/>
    <property type="project" value="UniProtKB"/>
</dbReference>
<dbReference type="GO" id="GO:0071568">
    <property type="term" value="F:UFM1 transferase activity"/>
    <property type="evidence" value="ECO:0000318"/>
    <property type="project" value="GO_Central"/>
</dbReference>
<dbReference type="GO" id="GO:0000077">
    <property type="term" value="P:DNA damage checkpoint signaling"/>
    <property type="evidence" value="ECO:0000250"/>
    <property type="project" value="UniProtKB"/>
</dbReference>
<dbReference type="GO" id="GO:0006281">
    <property type="term" value="P:DNA repair"/>
    <property type="evidence" value="ECO:0007669"/>
    <property type="project" value="UniProtKB-KW"/>
</dbReference>
<dbReference type="GO" id="GO:0030218">
    <property type="term" value="P:erythrocyte differentiation"/>
    <property type="evidence" value="ECO:0000250"/>
    <property type="project" value="UniProtKB"/>
</dbReference>
<dbReference type="GO" id="GO:0060218">
    <property type="term" value="P:hematopoietic stem cell differentiation"/>
    <property type="evidence" value="ECO:0000250"/>
    <property type="project" value="UniProtKB"/>
</dbReference>
<dbReference type="GO" id="GO:1903895">
    <property type="term" value="P:negative regulation of IRE1-mediated unfolded protein response"/>
    <property type="evidence" value="ECO:0000250"/>
    <property type="project" value="UniProtKB"/>
</dbReference>
<dbReference type="GO" id="GO:0032088">
    <property type="term" value="P:negative regulation of NF-kappaB transcription factor activity"/>
    <property type="evidence" value="ECO:0000250"/>
    <property type="project" value="UniProtKB"/>
</dbReference>
<dbReference type="GO" id="GO:0010508">
    <property type="term" value="P:positive regulation of autophagy"/>
    <property type="evidence" value="ECO:0000250"/>
    <property type="project" value="UniProtKB"/>
</dbReference>
<dbReference type="GO" id="GO:0140501">
    <property type="term" value="P:positive regulation of reticulophagy"/>
    <property type="evidence" value="ECO:0000250"/>
    <property type="project" value="UniProtKB"/>
</dbReference>
<dbReference type="GO" id="GO:0071569">
    <property type="term" value="P:protein ufmylation"/>
    <property type="evidence" value="ECO:0000250"/>
    <property type="project" value="UniProtKB"/>
</dbReference>
<dbReference type="GO" id="GO:0043122">
    <property type="term" value="P:regulation of canonical NF-kappaB signal transduction"/>
    <property type="evidence" value="ECO:0000250"/>
    <property type="project" value="UniProtKB"/>
</dbReference>
<dbReference type="GO" id="GO:0050727">
    <property type="term" value="P:regulation of inflammatory response"/>
    <property type="evidence" value="ECO:0000250"/>
    <property type="project" value="UniProtKB"/>
</dbReference>
<dbReference type="GO" id="GO:0072344">
    <property type="term" value="P:rescue of stalled ribosome"/>
    <property type="evidence" value="ECO:0000250"/>
    <property type="project" value="UniProtKB"/>
</dbReference>
<dbReference type="GO" id="GO:0034976">
    <property type="term" value="P:response to endoplasmic reticulum stress"/>
    <property type="evidence" value="ECO:0000250"/>
    <property type="project" value="UniProtKB"/>
</dbReference>
<dbReference type="GO" id="GO:0061709">
    <property type="term" value="P:reticulophagy"/>
    <property type="evidence" value="ECO:0000250"/>
    <property type="project" value="UniProtKB"/>
</dbReference>
<dbReference type="GO" id="GO:0032790">
    <property type="term" value="P:ribosome disassembly"/>
    <property type="evidence" value="ECO:0000250"/>
    <property type="project" value="UniProtKB"/>
</dbReference>
<dbReference type="InterPro" id="IPR018611">
    <property type="entry name" value="Ufl1"/>
</dbReference>
<dbReference type="InterPro" id="IPR056761">
    <property type="entry name" value="Ufl1-like_C"/>
</dbReference>
<dbReference type="InterPro" id="IPR056580">
    <property type="entry name" value="Ufl1_dom"/>
</dbReference>
<dbReference type="InterPro" id="IPR056579">
    <property type="entry name" value="Ufl1_N"/>
</dbReference>
<dbReference type="PANTHER" id="PTHR31057">
    <property type="entry name" value="E3 UFM1-PROTEIN LIGASE 1"/>
    <property type="match status" value="1"/>
</dbReference>
<dbReference type="PANTHER" id="PTHR31057:SF0">
    <property type="entry name" value="E3 UFM1-PROTEIN LIGASE 1"/>
    <property type="match status" value="1"/>
</dbReference>
<dbReference type="Pfam" id="PF09743">
    <property type="entry name" value="E3_UFM1_ligase"/>
    <property type="match status" value="1"/>
</dbReference>
<dbReference type="Pfam" id="PF23659">
    <property type="entry name" value="UFL1"/>
    <property type="match status" value="1"/>
</dbReference>
<dbReference type="Pfam" id="PF25041">
    <property type="entry name" value="UFL1_C"/>
    <property type="match status" value="1"/>
</dbReference>
<proteinExistence type="evidence at transcript level"/>
<organism>
    <name type="scientific">Danio rerio</name>
    <name type="common">Zebrafish</name>
    <name type="synonym">Brachydanio rerio</name>
    <dbReference type="NCBI Taxonomy" id="7955"/>
    <lineage>
        <taxon>Eukaryota</taxon>
        <taxon>Metazoa</taxon>
        <taxon>Chordata</taxon>
        <taxon>Craniata</taxon>
        <taxon>Vertebrata</taxon>
        <taxon>Euteleostomi</taxon>
        <taxon>Actinopterygii</taxon>
        <taxon>Neopterygii</taxon>
        <taxon>Teleostei</taxon>
        <taxon>Ostariophysi</taxon>
        <taxon>Cypriniformes</taxon>
        <taxon>Danionidae</taxon>
        <taxon>Danioninae</taxon>
        <taxon>Danio</taxon>
    </lineage>
</organism>
<evidence type="ECO:0000250" key="1">
    <source>
        <dbReference type="UniProtKB" id="O94874"/>
    </source>
</evidence>
<evidence type="ECO:0000256" key="2">
    <source>
        <dbReference type="SAM" id="MobiDB-lite"/>
    </source>
</evidence>
<evidence type="ECO:0000303" key="3">
    <source ref="1"/>
</evidence>
<evidence type="ECO:0000305" key="4"/>
<name>UFL1_DANRE</name>
<reference key="1">
    <citation type="submission" date="2003-08" db="EMBL/GenBank/DDBJ databases">
        <authorList>
            <consortium name="NIH - Zebrafish Gene Collection (ZGC) project"/>
        </authorList>
    </citation>
    <scope>NUCLEOTIDE SEQUENCE [LARGE SCALE MRNA]</scope>
    <source>
        <strain>AB</strain>
    </source>
</reference>
<sequence length="793" mass="88679">MAADWEEIRRLAADFQRAQFAETVQRLSERNCIEIVSKLVEDKKLDVVHTLDGKEYVTPAQISREIRDELYMHRGRINVVDLQKIINVDLVHVEGRANEIAKSDRGTQLILGQLIDEAYLDRLAEEVNDKLQEAGQVNIAELCKTYDLPGDFLTEALNARLGRVIQGQLDQYNRGMIFTQAFLSRHKACICGLFSGITRPTQINNLLNLYGFQENLVYSMLEELVNSARLKGSVVGGRQDKAIYIPDIYSKAQSTWVESFLKQNGYLEFESLTRLGIPDPINYIKKRFKSSRLLFLKTACVGRTIVDQLEASVEEAINSATWVDLQPMLPSILSEEDVGILLNEVLRSMNVQSSARLLSTSVVSEKFIAGCIALFEDLMQQKAQKEVKNNPVFLITEDDVKQSSALLETSASSKKDKRDERRKKAAEGGGSVKSGGGGNAREIRIRKTKKKGRKEEDSDEETTHSSQGRNKLGDVQFLSVEEIVEVLEEKVCDSSEEMLQELAEQLQRPLSKMYQEVVTTAFLSTSSSGAGGSRKKNMKDLQEEINNLYNNIRLFEKGTKLFSDETQATVAKHVLKTVCTDVTNVLLSFVAAEHMTSDSSAAMTSEIRLKILAKLSDEVRSPLMKLHNSLNGKAIEEFLSCLETSAEECGLFLKKGDKKRERQALSVHRQALCEQLRDAEDPALVLHLTSVLLFQNVTHCMLHAPGRCVPHIIGFLQSKIPEDQHKLLSQYQSLVVKQLVVQGHGAEKKTVPPEGAGGPADSDDTESLQRELHSLSRDIKDTVLAQRKPSVTE</sequence>
<keyword id="KW-0158">Chromosome</keyword>
<keyword id="KW-0963">Cytoplasm</keyword>
<keyword id="KW-0227">DNA damage</keyword>
<keyword id="KW-0234">DNA repair</keyword>
<keyword id="KW-0256">Endoplasmic reticulum</keyword>
<keyword id="KW-0472">Membrane</keyword>
<keyword id="KW-0539">Nucleus</keyword>
<keyword id="KW-1185">Reference proteome</keyword>
<keyword id="KW-0808">Transferase</keyword>
<keyword id="KW-0833">Ubl conjugation pathway</keyword>
<feature type="chain" id="PRO_0000328124" description="E3 UFM1-protein ligase 1">
    <location>
        <begin position="1"/>
        <end position="793"/>
    </location>
</feature>
<feature type="region of interest" description="Required for E3 UFM1-protein ligase activity" evidence="1">
    <location>
        <begin position="2"/>
        <end position="212"/>
    </location>
</feature>
<feature type="region of interest" description="Disordered" evidence="2">
    <location>
        <begin position="405"/>
        <end position="472"/>
    </location>
</feature>
<feature type="region of interest" description="Disordered" evidence="2">
    <location>
        <begin position="745"/>
        <end position="793"/>
    </location>
</feature>
<feature type="compositionally biased region" description="Gly residues" evidence="2">
    <location>
        <begin position="427"/>
        <end position="439"/>
    </location>
</feature>
<feature type="compositionally biased region" description="Basic and acidic residues" evidence="2">
    <location>
        <begin position="767"/>
        <end position="781"/>
    </location>
</feature>
<accession>Q6PGY6</accession>
<comment type="function">
    <text evidence="1">E3 protein ligase that mediates ufmylation, the covalent attachment of the ubiquitin-like modifier UFM1 to lysine residues on target proteins, and which plays a key role in various processes, such as ribosome recycling, response to DNA damage, interferon response or reticulophagy (also called ER-phagy). As part of the UREL complex, plays a key role in ribosome recycling by catalyzing mono-ufmylation of RPL26/uL24 subunit of the 60S ribosome. Ufmylation of RPL26/uL24 occurs on free 60S ribosomes following ribosome dissociation: it weakens the junction between post-termination 60S subunits and SEC61 translocons, promoting release and recycling of the large ribosomal subunit from the endoplasmic reticulum membrane. Ufmylation of RPL26/uL24 and subsequent 60S ribosome recycling either take place after normal termination of translation or after ribosome stalling during cotranslational translocation at the endoplasmic reticulum. Involved in reticulophagy in response to endoplasmic reticulum stress by mediating ufmylation of proteins such as CYB5R3 and RPN1, thereby promoting lysosomal degradation of ufmylated proteins. Ufmylation in response to endoplasmic reticulum stress is essential for processes such as hematopoiesis, blood vessel morphogenesis or inflammatory response.</text>
</comment>
<comment type="subunit">
    <text evidence="1">Catalytic component of the UFM1 ribosome E3 ligase (UREL) complex. Interacts with E2-like enzyme UFC1.</text>
</comment>
<comment type="subcellular location">
    <subcellularLocation>
        <location evidence="1">Endoplasmic reticulum membrane</location>
    </subcellularLocation>
    <subcellularLocation>
        <location evidence="1">Cytoplasm</location>
        <location evidence="1">Cytosol</location>
    </subcellularLocation>
    <subcellularLocation>
        <location evidence="1">Nucleus</location>
    </subcellularLocation>
    <subcellularLocation>
        <location evidence="1">Chromosome</location>
    </subcellularLocation>
    <text evidence="1">Recruited to double-strand breaks by the MRE11-RAD50-NBN (MRN) complex following DNA damage.</text>
</comment>
<comment type="similarity">
    <text evidence="4">Belongs to the UFL1 family.</text>
</comment>
<gene>
    <name evidence="1" type="primary">ufl1</name>
    <name evidence="3" type="ORF">zgc:63562</name>
</gene>